<feature type="chain" id="PRO_0000173676" description="Probable transaldolase 2">
    <location>
        <begin position="1"/>
        <end position="218"/>
    </location>
</feature>
<feature type="active site" description="Schiff-base intermediate with substrate" evidence="1">
    <location>
        <position position="83"/>
    </location>
</feature>
<gene>
    <name evidence="1" type="primary">tal2</name>
    <name type="ordered locus">lmo0343</name>
</gene>
<sequence>MKFFLDTASVSEIKRISELGLVDGVTTNPTIIAKEGRPFEEVIKEICSIVDGPVSAEVIGLEADKMVEEARILAKWAPNVVVKIPMTEEGLKAVHTLTAEGIKTNVTLIFTVSQGLMAAKAGATYISPFLGRLDDIGTDGMILIKNLKKVLDNYGLKAEIISASIRHIGHLEEAAEAGAHIATIPGSLFPKLWSHPLTDKGIEGFLKDWEAFSQKEGN</sequence>
<comment type="function">
    <text evidence="1">Transaldolase is important for the balance of metabolites in the pentose-phosphate pathway.</text>
</comment>
<comment type="catalytic activity">
    <reaction evidence="1">
        <text>D-sedoheptulose 7-phosphate + D-glyceraldehyde 3-phosphate = D-erythrose 4-phosphate + beta-D-fructose 6-phosphate</text>
        <dbReference type="Rhea" id="RHEA:17053"/>
        <dbReference type="ChEBI" id="CHEBI:16897"/>
        <dbReference type="ChEBI" id="CHEBI:57483"/>
        <dbReference type="ChEBI" id="CHEBI:57634"/>
        <dbReference type="ChEBI" id="CHEBI:59776"/>
        <dbReference type="EC" id="2.2.1.2"/>
    </reaction>
</comment>
<comment type="pathway">
    <text evidence="1">Carbohydrate degradation; pentose phosphate pathway; D-glyceraldehyde 3-phosphate and beta-D-fructose 6-phosphate from D-ribose 5-phosphate and D-xylulose 5-phosphate (non-oxidative stage): step 2/3.</text>
</comment>
<comment type="subcellular location">
    <subcellularLocation>
        <location evidence="1">Cytoplasm</location>
    </subcellularLocation>
</comment>
<comment type="similarity">
    <text evidence="1">Belongs to the transaldolase family. Type 3B subfamily.</text>
</comment>
<name>TAL2_LISMO</name>
<reference key="1">
    <citation type="journal article" date="2001" name="Science">
        <title>Comparative genomics of Listeria species.</title>
        <authorList>
            <person name="Glaser P."/>
            <person name="Frangeul L."/>
            <person name="Buchrieser C."/>
            <person name="Rusniok C."/>
            <person name="Amend A."/>
            <person name="Baquero F."/>
            <person name="Berche P."/>
            <person name="Bloecker H."/>
            <person name="Brandt P."/>
            <person name="Chakraborty T."/>
            <person name="Charbit A."/>
            <person name="Chetouani F."/>
            <person name="Couve E."/>
            <person name="de Daruvar A."/>
            <person name="Dehoux P."/>
            <person name="Domann E."/>
            <person name="Dominguez-Bernal G."/>
            <person name="Duchaud E."/>
            <person name="Durant L."/>
            <person name="Dussurget O."/>
            <person name="Entian K.-D."/>
            <person name="Fsihi H."/>
            <person name="Garcia-del Portillo F."/>
            <person name="Garrido P."/>
            <person name="Gautier L."/>
            <person name="Goebel W."/>
            <person name="Gomez-Lopez N."/>
            <person name="Hain T."/>
            <person name="Hauf J."/>
            <person name="Jackson D."/>
            <person name="Jones L.-M."/>
            <person name="Kaerst U."/>
            <person name="Kreft J."/>
            <person name="Kuhn M."/>
            <person name="Kunst F."/>
            <person name="Kurapkat G."/>
            <person name="Madueno E."/>
            <person name="Maitournam A."/>
            <person name="Mata Vicente J."/>
            <person name="Ng E."/>
            <person name="Nedjari H."/>
            <person name="Nordsiek G."/>
            <person name="Novella S."/>
            <person name="de Pablos B."/>
            <person name="Perez-Diaz J.-C."/>
            <person name="Purcell R."/>
            <person name="Remmel B."/>
            <person name="Rose M."/>
            <person name="Schlueter T."/>
            <person name="Simoes N."/>
            <person name="Tierrez A."/>
            <person name="Vazquez-Boland J.-A."/>
            <person name="Voss H."/>
            <person name="Wehland J."/>
            <person name="Cossart P."/>
        </authorList>
    </citation>
    <scope>NUCLEOTIDE SEQUENCE [LARGE SCALE GENOMIC DNA]</scope>
    <source>
        <strain>ATCC BAA-679 / EGD-e</strain>
    </source>
</reference>
<protein>
    <recommendedName>
        <fullName evidence="1">Probable transaldolase 2</fullName>
        <ecNumber evidence="1">2.2.1.2</ecNumber>
    </recommendedName>
</protein>
<accession>P66957</accession>
<accession>Q92EU7</accession>
<dbReference type="EC" id="2.2.1.2" evidence="1"/>
<dbReference type="EMBL" id="AL591975">
    <property type="protein sequence ID" value="CAC98422.1"/>
    <property type="molecule type" value="Genomic_DNA"/>
</dbReference>
<dbReference type="PIR" id="AH1117">
    <property type="entry name" value="AH1117"/>
</dbReference>
<dbReference type="RefSeq" id="NP_463873.1">
    <property type="nucleotide sequence ID" value="NC_003210.1"/>
</dbReference>
<dbReference type="SMR" id="P66957"/>
<dbReference type="STRING" id="169963.gene:17592994"/>
<dbReference type="PaxDb" id="169963-lmo0343"/>
<dbReference type="EnsemblBacteria" id="CAC98422">
    <property type="protein sequence ID" value="CAC98422"/>
    <property type="gene ID" value="CAC98422"/>
</dbReference>
<dbReference type="GeneID" id="987583"/>
<dbReference type="KEGG" id="lmo:lmo0343"/>
<dbReference type="PATRIC" id="fig|169963.11.peg.353"/>
<dbReference type="eggNOG" id="COG0176">
    <property type="taxonomic scope" value="Bacteria"/>
</dbReference>
<dbReference type="HOGENOM" id="CLU_079764_0_0_9"/>
<dbReference type="OrthoDB" id="9807051at2"/>
<dbReference type="PhylomeDB" id="P66957"/>
<dbReference type="BioCyc" id="LMON169963:LMO0343-MONOMER"/>
<dbReference type="UniPathway" id="UPA00115">
    <property type="reaction ID" value="UER00414"/>
</dbReference>
<dbReference type="Proteomes" id="UP000000817">
    <property type="component" value="Chromosome"/>
</dbReference>
<dbReference type="GO" id="GO:0005737">
    <property type="term" value="C:cytoplasm"/>
    <property type="evidence" value="ECO:0007669"/>
    <property type="project" value="UniProtKB-SubCell"/>
</dbReference>
<dbReference type="GO" id="GO:0016832">
    <property type="term" value="F:aldehyde-lyase activity"/>
    <property type="evidence" value="ECO:0007669"/>
    <property type="project" value="InterPro"/>
</dbReference>
<dbReference type="GO" id="GO:0004801">
    <property type="term" value="F:transaldolase activity"/>
    <property type="evidence" value="ECO:0007669"/>
    <property type="project" value="UniProtKB-UniRule"/>
</dbReference>
<dbReference type="GO" id="GO:0005975">
    <property type="term" value="P:carbohydrate metabolic process"/>
    <property type="evidence" value="ECO:0007669"/>
    <property type="project" value="InterPro"/>
</dbReference>
<dbReference type="GO" id="GO:0006098">
    <property type="term" value="P:pentose-phosphate shunt"/>
    <property type="evidence" value="ECO:0007669"/>
    <property type="project" value="UniProtKB-UniRule"/>
</dbReference>
<dbReference type="CDD" id="cd00956">
    <property type="entry name" value="Transaldolase_FSA"/>
    <property type="match status" value="1"/>
</dbReference>
<dbReference type="FunFam" id="3.20.20.70:FF:000018">
    <property type="entry name" value="Probable transaldolase"/>
    <property type="match status" value="1"/>
</dbReference>
<dbReference type="Gene3D" id="3.20.20.70">
    <property type="entry name" value="Aldolase class I"/>
    <property type="match status" value="1"/>
</dbReference>
<dbReference type="HAMAP" id="MF_00494">
    <property type="entry name" value="Transaldolase_3b"/>
    <property type="match status" value="1"/>
</dbReference>
<dbReference type="InterPro" id="IPR013785">
    <property type="entry name" value="Aldolase_TIM"/>
</dbReference>
<dbReference type="InterPro" id="IPR001585">
    <property type="entry name" value="TAL/FSA"/>
</dbReference>
<dbReference type="InterPro" id="IPR022999">
    <property type="entry name" value="Transaldolase_3B"/>
</dbReference>
<dbReference type="InterPro" id="IPR004731">
    <property type="entry name" value="Transaldolase_3B/F6P_aldolase"/>
</dbReference>
<dbReference type="InterPro" id="IPR018225">
    <property type="entry name" value="Transaldolase_AS"/>
</dbReference>
<dbReference type="InterPro" id="IPR033919">
    <property type="entry name" value="TSA/FSA_arc/bac"/>
</dbReference>
<dbReference type="NCBIfam" id="TIGR00875">
    <property type="entry name" value="fsa_talC_mipB"/>
    <property type="match status" value="1"/>
</dbReference>
<dbReference type="PANTHER" id="PTHR10683">
    <property type="entry name" value="TRANSALDOLASE"/>
    <property type="match status" value="1"/>
</dbReference>
<dbReference type="PANTHER" id="PTHR10683:SF36">
    <property type="entry name" value="TRANSALDOLASE"/>
    <property type="match status" value="1"/>
</dbReference>
<dbReference type="Pfam" id="PF00923">
    <property type="entry name" value="TAL_FSA"/>
    <property type="match status" value="1"/>
</dbReference>
<dbReference type="SUPFAM" id="SSF51569">
    <property type="entry name" value="Aldolase"/>
    <property type="match status" value="1"/>
</dbReference>
<dbReference type="PROSITE" id="PS01054">
    <property type="entry name" value="TRANSALDOLASE_1"/>
    <property type="match status" value="1"/>
</dbReference>
<dbReference type="PROSITE" id="PS00958">
    <property type="entry name" value="TRANSALDOLASE_2"/>
    <property type="match status" value="1"/>
</dbReference>
<organism>
    <name type="scientific">Listeria monocytogenes serovar 1/2a (strain ATCC BAA-679 / EGD-e)</name>
    <dbReference type="NCBI Taxonomy" id="169963"/>
    <lineage>
        <taxon>Bacteria</taxon>
        <taxon>Bacillati</taxon>
        <taxon>Bacillota</taxon>
        <taxon>Bacilli</taxon>
        <taxon>Bacillales</taxon>
        <taxon>Listeriaceae</taxon>
        <taxon>Listeria</taxon>
    </lineage>
</organism>
<evidence type="ECO:0000255" key="1">
    <source>
        <dbReference type="HAMAP-Rule" id="MF_00494"/>
    </source>
</evidence>
<proteinExistence type="inferred from homology"/>
<keyword id="KW-0963">Cytoplasm</keyword>
<keyword id="KW-0570">Pentose shunt</keyword>
<keyword id="KW-1185">Reference proteome</keyword>
<keyword id="KW-0704">Schiff base</keyword>
<keyword id="KW-0808">Transferase</keyword>